<accession>C0R4J5</accession>
<comment type="catalytic activity">
    <reaction evidence="1">
        <text>(2R)-3-phosphoglycerate + ATP = (2R)-3-phospho-glyceroyl phosphate + ADP</text>
        <dbReference type="Rhea" id="RHEA:14801"/>
        <dbReference type="ChEBI" id="CHEBI:30616"/>
        <dbReference type="ChEBI" id="CHEBI:57604"/>
        <dbReference type="ChEBI" id="CHEBI:58272"/>
        <dbReference type="ChEBI" id="CHEBI:456216"/>
        <dbReference type="EC" id="2.7.2.3"/>
    </reaction>
</comment>
<comment type="pathway">
    <text evidence="1">Carbohydrate degradation; glycolysis; pyruvate from D-glyceraldehyde 3-phosphate: step 2/5.</text>
</comment>
<comment type="subunit">
    <text evidence="1">Monomer.</text>
</comment>
<comment type="subcellular location">
    <subcellularLocation>
        <location evidence="1">Cytoplasm</location>
    </subcellularLocation>
</comment>
<comment type="similarity">
    <text evidence="1">Belongs to the phosphoglycerate kinase family.</text>
</comment>
<proteinExistence type="inferred from homology"/>
<gene>
    <name evidence="1" type="primary">pgk</name>
    <name type="ordered locus">WRi_011430</name>
</gene>
<dbReference type="EC" id="2.7.2.3" evidence="1"/>
<dbReference type="EMBL" id="CP001391">
    <property type="protein sequence ID" value="ACN95837.1"/>
    <property type="molecule type" value="Genomic_DNA"/>
</dbReference>
<dbReference type="RefSeq" id="WP_006280509.1">
    <property type="nucleotide sequence ID" value="NZ_MKIF01000089.1"/>
</dbReference>
<dbReference type="SMR" id="C0R4J5"/>
<dbReference type="STRING" id="66084.WRi_011430"/>
<dbReference type="KEGG" id="wri:WRi_011430"/>
<dbReference type="HOGENOM" id="CLU_025427_0_2_5"/>
<dbReference type="UniPathway" id="UPA00109">
    <property type="reaction ID" value="UER00185"/>
</dbReference>
<dbReference type="Proteomes" id="UP000001293">
    <property type="component" value="Chromosome"/>
</dbReference>
<dbReference type="GO" id="GO:0005829">
    <property type="term" value="C:cytosol"/>
    <property type="evidence" value="ECO:0007669"/>
    <property type="project" value="TreeGrafter"/>
</dbReference>
<dbReference type="GO" id="GO:0043531">
    <property type="term" value="F:ADP binding"/>
    <property type="evidence" value="ECO:0007669"/>
    <property type="project" value="TreeGrafter"/>
</dbReference>
<dbReference type="GO" id="GO:0005524">
    <property type="term" value="F:ATP binding"/>
    <property type="evidence" value="ECO:0007669"/>
    <property type="project" value="UniProtKB-KW"/>
</dbReference>
<dbReference type="GO" id="GO:0004618">
    <property type="term" value="F:phosphoglycerate kinase activity"/>
    <property type="evidence" value="ECO:0007669"/>
    <property type="project" value="UniProtKB-UniRule"/>
</dbReference>
<dbReference type="GO" id="GO:0006094">
    <property type="term" value="P:gluconeogenesis"/>
    <property type="evidence" value="ECO:0007669"/>
    <property type="project" value="TreeGrafter"/>
</dbReference>
<dbReference type="GO" id="GO:0006096">
    <property type="term" value="P:glycolytic process"/>
    <property type="evidence" value="ECO:0007669"/>
    <property type="project" value="UniProtKB-UniRule"/>
</dbReference>
<dbReference type="FunFam" id="3.40.50.1260:FF:000006">
    <property type="entry name" value="Phosphoglycerate kinase"/>
    <property type="match status" value="1"/>
</dbReference>
<dbReference type="FunFam" id="3.40.50.1260:FF:000031">
    <property type="entry name" value="Phosphoglycerate kinase 1"/>
    <property type="match status" value="1"/>
</dbReference>
<dbReference type="Gene3D" id="3.40.50.1260">
    <property type="entry name" value="Phosphoglycerate kinase, N-terminal domain"/>
    <property type="match status" value="2"/>
</dbReference>
<dbReference type="HAMAP" id="MF_00145">
    <property type="entry name" value="Phosphoglyc_kinase"/>
    <property type="match status" value="1"/>
</dbReference>
<dbReference type="InterPro" id="IPR001576">
    <property type="entry name" value="Phosphoglycerate_kinase"/>
</dbReference>
<dbReference type="InterPro" id="IPR015824">
    <property type="entry name" value="Phosphoglycerate_kinase_N"/>
</dbReference>
<dbReference type="InterPro" id="IPR036043">
    <property type="entry name" value="Phosphoglycerate_kinase_sf"/>
</dbReference>
<dbReference type="PANTHER" id="PTHR11406">
    <property type="entry name" value="PHOSPHOGLYCERATE KINASE"/>
    <property type="match status" value="1"/>
</dbReference>
<dbReference type="PANTHER" id="PTHR11406:SF23">
    <property type="entry name" value="PHOSPHOGLYCERATE KINASE 1, CHLOROPLASTIC-RELATED"/>
    <property type="match status" value="1"/>
</dbReference>
<dbReference type="Pfam" id="PF00162">
    <property type="entry name" value="PGK"/>
    <property type="match status" value="1"/>
</dbReference>
<dbReference type="PIRSF" id="PIRSF000724">
    <property type="entry name" value="Pgk"/>
    <property type="match status" value="1"/>
</dbReference>
<dbReference type="PRINTS" id="PR00477">
    <property type="entry name" value="PHGLYCKINASE"/>
</dbReference>
<dbReference type="SUPFAM" id="SSF53748">
    <property type="entry name" value="Phosphoglycerate kinase"/>
    <property type="match status" value="1"/>
</dbReference>
<evidence type="ECO:0000255" key="1">
    <source>
        <dbReference type="HAMAP-Rule" id="MF_00145"/>
    </source>
</evidence>
<protein>
    <recommendedName>
        <fullName evidence="1">Phosphoglycerate kinase</fullName>
        <ecNumber evidence="1">2.7.2.3</ecNumber>
    </recommendedName>
</protein>
<keyword id="KW-0067">ATP-binding</keyword>
<keyword id="KW-0963">Cytoplasm</keyword>
<keyword id="KW-0324">Glycolysis</keyword>
<keyword id="KW-0418">Kinase</keyword>
<keyword id="KW-0547">Nucleotide-binding</keyword>
<keyword id="KW-0808">Transferase</keyword>
<organism>
    <name type="scientific">Wolbachia sp. subsp. Drosophila simulans (strain wRi)</name>
    <dbReference type="NCBI Taxonomy" id="66084"/>
    <lineage>
        <taxon>Bacteria</taxon>
        <taxon>Pseudomonadati</taxon>
        <taxon>Pseudomonadota</taxon>
        <taxon>Alphaproteobacteria</taxon>
        <taxon>Rickettsiales</taxon>
        <taxon>Anaplasmataceae</taxon>
        <taxon>Wolbachieae</taxon>
        <taxon>Wolbachia</taxon>
    </lineage>
</organism>
<name>PGK_WOLWR</name>
<feature type="chain" id="PRO_1000192860" description="Phosphoglycerate kinase">
    <location>
        <begin position="1"/>
        <end position="398"/>
    </location>
</feature>
<feature type="binding site" evidence="1">
    <location>
        <begin position="21"/>
        <end position="23"/>
    </location>
    <ligand>
        <name>substrate</name>
    </ligand>
</feature>
<feature type="binding site" evidence="1">
    <location>
        <position position="36"/>
    </location>
    <ligand>
        <name>substrate</name>
    </ligand>
</feature>
<feature type="binding site" evidence="1">
    <location>
        <begin position="59"/>
        <end position="62"/>
    </location>
    <ligand>
        <name>substrate</name>
    </ligand>
</feature>
<feature type="binding site" evidence="1">
    <location>
        <position position="117"/>
    </location>
    <ligand>
        <name>substrate</name>
    </ligand>
</feature>
<feature type="binding site" evidence="1">
    <location>
        <position position="150"/>
    </location>
    <ligand>
        <name>substrate</name>
    </ligand>
</feature>
<feature type="binding site" evidence="1">
    <location>
        <position position="200"/>
    </location>
    <ligand>
        <name>ATP</name>
        <dbReference type="ChEBI" id="CHEBI:30616"/>
    </ligand>
</feature>
<feature type="binding site" evidence="1">
    <location>
        <position position="321"/>
    </location>
    <ligand>
        <name>ATP</name>
        <dbReference type="ChEBI" id="CHEBI:30616"/>
    </ligand>
</feature>
<feature type="binding site" evidence="1">
    <location>
        <begin position="351"/>
        <end position="354"/>
    </location>
    <ligand>
        <name>ATP</name>
        <dbReference type="ChEBI" id="CHEBI:30616"/>
    </ligand>
</feature>
<sequence>MNIPSIENCDLHNKAVLLRVDFNVPIKDGEIRDVTRILRALPTIQYLVNASAKIIIISHFGRPKARDNNLSLKNVIDTLSQLLNKKVKFIDDCVGEKVQKAVSAMDAGDIILLENLRFYEGEKENDANFARQLASLADIYVNDAFSCSHRAHASISRITEFLPSYAGFCLQDELKYLEKAVSFKAKPITAIVGGAKISTKIKVLMKLTEKVDYLVLGGAIANNFLSFSKVNIGKSFFQNGVDDLLHNIVETANKNNCKIVVPEDVLVAVNSDYSTSISRKTESILDGDIILDIGSQTLSTISSIIASSKTLLWNGPIGVFEHSAFASGTIGVMKIVSDLTHKGKLTSIIGGGDSLSAISAAGLTDKDFTYVSTGGGAFLDWLSGDEMPGVAALQKRLD</sequence>
<reference key="1">
    <citation type="journal article" date="2009" name="Proc. Natl. Acad. Sci. U.S.A.">
        <title>The mosaic genome structure of the Wolbachia wRi strain infecting Drosophila simulans.</title>
        <authorList>
            <person name="Klasson L."/>
            <person name="Westberg J."/>
            <person name="Sapountzis P."/>
            <person name="Naeslund K."/>
            <person name="Lutnaes Y."/>
            <person name="Darby A.C."/>
            <person name="Veneti Z."/>
            <person name="Chen L."/>
            <person name="Braig H.R."/>
            <person name="Garrett R."/>
            <person name="Bourtzis K."/>
            <person name="Andersson S.G."/>
        </authorList>
    </citation>
    <scope>NUCLEOTIDE SEQUENCE [LARGE SCALE GENOMIC DNA]</scope>
    <source>
        <strain>wRi</strain>
    </source>
</reference>